<protein>
    <recommendedName>
        <fullName evidence="6">2-methylpropanoate--CoA ligase CCL4</fullName>
        <shortName evidence="4">HlCCL4</shortName>
        <ecNumber evidence="3">6.2.1.-</ecNumber>
    </recommendedName>
    <alternativeName>
        <fullName evidence="6">2-methylbutanoate--CoA ligase CCL4</fullName>
        <ecNumber evidence="3">6.2.1.-</ecNumber>
    </alternativeName>
    <alternativeName>
        <fullName evidence="6">Butanoate--CoA ligase CCL3</fullName>
        <ecNumber evidence="3">6.2.1.-</ecNumber>
    </alternativeName>
    <alternativeName>
        <fullName evidence="6">Propionate--CoA ligase CCL3</fullName>
        <ecNumber evidence="3">6.2.1.17</ecNumber>
    </alternativeName>
</protein>
<keyword id="KW-0067">ATP-binding</keyword>
<keyword id="KW-0963">Cytoplasm</keyword>
<keyword id="KW-0436">Ligase</keyword>
<keyword id="KW-0547">Nucleotide-binding</keyword>
<organism>
    <name type="scientific">Humulus lupulus</name>
    <name type="common">European hop</name>
    <dbReference type="NCBI Taxonomy" id="3486"/>
    <lineage>
        <taxon>Eukaryota</taxon>
        <taxon>Viridiplantae</taxon>
        <taxon>Streptophyta</taxon>
        <taxon>Embryophyta</taxon>
        <taxon>Tracheophyta</taxon>
        <taxon>Spermatophyta</taxon>
        <taxon>Magnoliopsida</taxon>
        <taxon>eudicotyledons</taxon>
        <taxon>Gunneridae</taxon>
        <taxon>Pentapetalae</taxon>
        <taxon>rosids</taxon>
        <taxon>fabids</taxon>
        <taxon>Rosales</taxon>
        <taxon>Cannabaceae</taxon>
        <taxon>Humulus</taxon>
    </lineage>
</organism>
<evidence type="ECO:0000250" key="1">
    <source>
        <dbReference type="UniProtKB" id="Q42524"/>
    </source>
</evidence>
<evidence type="ECO:0000250" key="2">
    <source>
        <dbReference type="UniProtKB" id="Q81G39"/>
    </source>
</evidence>
<evidence type="ECO:0000269" key="3">
    <source>
    </source>
</evidence>
<evidence type="ECO:0000303" key="4">
    <source>
    </source>
</evidence>
<evidence type="ECO:0000305" key="5"/>
<evidence type="ECO:0000305" key="6">
    <source>
    </source>
</evidence>
<evidence type="ECO:0000305" key="7">
    <source>
    </source>
</evidence>
<accession>M4IQQ5</accession>
<gene>
    <name evidence="4" type="primary">CCL4</name>
</gene>
<dbReference type="EC" id="6.2.1.-" evidence="3"/>
<dbReference type="EC" id="6.2.1.17" evidence="3"/>
<dbReference type="EMBL" id="JQ740206">
    <property type="protein sequence ID" value="AGA17921.1"/>
    <property type="molecule type" value="mRNA"/>
</dbReference>
<dbReference type="SMR" id="M4IQQ5"/>
<dbReference type="BioCyc" id="MetaCyc:MONOMER-20125"/>
<dbReference type="GO" id="GO:0005829">
    <property type="term" value="C:cytosol"/>
    <property type="evidence" value="ECO:0000314"/>
    <property type="project" value="UniProtKB"/>
</dbReference>
<dbReference type="GO" id="GO:0043759">
    <property type="term" value="F:2-methylbutanoate-CoA ligase activity"/>
    <property type="evidence" value="ECO:0000314"/>
    <property type="project" value="UniProtKB"/>
</dbReference>
<dbReference type="GO" id="GO:0005524">
    <property type="term" value="F:ATP binding"/>
    <property type="evidence" value="ECO:0007669"/>
    <property type="project" value="UniProtKB-KW"/>
</dbReference>
<dbReference type="GO" id="GO:0016405">
    <property type="term" value="F:CoA-ligase activity"/>
    <property type="evidence" value="ECO:0000314"/>
    <property type="project" value="UniProtKB"/>
</dbReference>
<dbReference type="GO" id="GO:0031956">
    <property type="term" value="F:medium-chain fatty acid-CoA ligase activity"/>
    <property type="evidence" value="ECO:0000314"/>
    <property type="project" value="UniProtKB"/>
</dbReference>
<dbReference type="GO" id="GO:0050218">
    <property type="term" value="F:propionate-CoA ligase activity"/>
    <property type="evidence" value="ECO:0000314"/>
    <property type="project" value="UniProtKB"/>
</dbReference>
<dbReference type="CDD" id="cd12118">
    <property type="entry name" value="ttLC_FACS_AEE21_like"/>
    <property type="match status" value="1"/>
</dbReference>
<dbReference type="FunFam" id="3.30.300.30:FF:000008">
    <property type="entry name" value="2,3-dihydroxybenzoate-AMP ligase"/>
    <property type="match status" value="1"/>
</dbReference>
<dbReference type="FunFam" id="3.40.50.12780:FF:000003">
    <property type="entry name" value="Long-chain-fatty-acid--CoA ligase FadD"/>
    <property type="match status" value="1"/>
</dbReference>
<dbReference type="Gene3D" id="3.30.300.30">
    <property type="match status" value="1"/>
</dbReference>
<dbReference type="Gene3D" id="3.40.50.12780">
    <property type="entry name" value="N-terminal domain of ligase-like"/>
    <property type="match status" value="1"/>
</dbReference>
<dbReference type="InterPro" id="IPR025110">
    <property type="entry name" value="AMP-bd_C"/>
</dbReference>
<dbReference type="InterPro" id="IPR045851">
    <property type="entry name" value="AMP-bd_C_sf"/>
</dbReference>
<dbReference type="InterPro" id="IPR020845">
    <property type="entry name" value="AMP-binding_CS"/>
</dbReference>
<dbReference type="InterPro" id="IPR000873">
    <property type="entry name" value="AMP-dep_synth/lig_dom"/>
</dbReference>
<dbReference type="InterPro" id="IPR042099">
    <property type="entry name" value="ANL_N_sf"/>
</dbReference>
<dbReference type="NCBIfam" id="NF006020">
    <property type="entry name" value="PRK08162.1"/>
    <property type="match status" value="1"/>
</dbReference>
<dbReference type="PANTHER" id="PTHR43859">
    <property type="entry name" value="ACYL-ACTIVATING ENZYME"/>
    <property type="match status" value="1"/>
</dbReference>
<dbReference type="PANTHER" id="PTHR43859:SF57">
    <property type="entry name" value="ACYL-ACTIVATING ENZYME 8-RELATED"/>
    <property type="match status" value="1"/>
</dbReference>
<dbReference type="Pfam" id="PF00501">
    <property type="entry name" value="AMP-binding"/>
    <property type="match status" value="1"/>
</dbReference>
<dbReference type="Pfam" id="PF13193">
    <property type="entry name" value="AMP-binding_C"/>
    <property type="match status" value="1"/>
</dbReference>
<dbReference type="SUPFAM" id="SSF56801">
    <property type="entry name" value="Acetyl-CoA synthetase-like"/>
    <property type="match status" value="1"/>
</dbReference>
<dbReference type="PROSITE" id="PS00455">
    <property type="entry name" value="AMP_BINDING"/>
    <property type="match status" value="1"/>
</dbReference>
<comment type="function">
    <text evidence="3 7">Involved in the biosynthesis of prenylated phenolics natural products which contribute to the bitter taste of beer and display broad biological activities (Probable). Catalyzes the ligation of CoA on 2-methylpropanoate (isobutyric acid) and 2-methylbutanoate to produce 2-methylpropanoyl-CoA and 2-methylbutanoyl-CoA, respectively (PubMed:23300257). Can also use propanoate and butanoate as substrates with a lower efficiency (PubMed:23300257).</text>
</comment>
<comment type="catalytic activity">
    <reaction evidence="3">
        <text>2-methylpropanoate + ATP + CoA = 2-methylpropanoyl-CoA + AMP + diphosphate</text>
        <dbReference type="Rhea" id="RHEA:46176"/>
        <dbReference type="ChEBI" id="CHEBI:30616"/>
        <dbReference type="ChEBI" id="CHEBI:33019"/>
        <dbReference type="ChEBI" id="CHEBI:48944"/>
        <dbReference type="ChEBI" id="CHEBI:57287"/>
        <dbReference type="ChEBI" id="CHEBI:57338"/>
        <dbReference type="ChEBI" id="CHEBI:456215"/>
    </reaction>
    <physiologicalReaction direction="left-to-right" evidence="3">
        <dbReference type="Rhea" id="RHEA:46177"/>
    </physiologicalReaction>
</comment>
<comment type="catalytic activity">
    <reaction evidence="3">
        <text>propanoate + ATP + CoA = propanoyl-CoA + AMP + diphosphate</text>
        <dbReference type="Rhea" id="RHEA:20373"/>
        <dbReference type="ChEBI" id="CHEBI:17272"/>
        <dbReference type="ChEBI" id="CHEBI:30616"/>
        <dbReference type="ChEBI" id="CHEBI:33019"/>
        <dbReference type="ChEBI" id="CHEBI:57287"/>
        <dbReference type="ChEBI" id="CHEBI:57392"/>
        <dbReference type="ChEBI" id="CHEBI:456215"/>
        <dbReference type="EC" id="6.2.1.17"/>
    </reaction>
    <physiologicalReaction direction="left-to-right" evidence="3">
        <dbReference type="Rhea" id="RHEA:20374"/>
    </physiologicalReaction>
</comment>
<comment type="catalytic activity">
    <reaction evidence="3">
        <text>butanoate + ATP + CoA = butanoyl-CoA + AMP + diphosphate</text>
        <dbReference type="Rhea" id="RHEA:46172"/>
        <dbReference type="ChEBI" id="CHEBI:17968"/>
        <dbReference type="ChEBI" id="CHEBI:30616"/>
        <dbReference type="ChEBI" id="CHEBI:33019"/>
        <dbReference type="ChEBI" id="CHEBI:57287"/>
        <dbReference type="ChEBI" id="CHEBI:57371"/>
        <dbReference type="ChEBI" id="CHEBI:456215"/>
    </reaction>
    <physiologicalReaction direction="left-to-right" evidence="3">
        <dbReference type="Rhea" id="RHEA:46173"/>
    </physiologicalReaction>
</comment>
<comment type="catalytic activity">
    <reaction evidence="3">
        <text>2-methylbutanoate + ATP + CoA = 2-methylbutanoyl-CoA + AMP + diphosphate</text>
        <dbReference type="Rhea" id="RHEA:46180"/>
        <dbReference type="ChEBI" id="CHEBI:30616"/>
        <dbReference type="ChEBI" id="CHEBI:33019"/>
        <dbReference type="ChEBI" id="CHEBI:48946"/>
        <dbReference type="ChEBI" id="CHEBI:57287"/>
        <dbReference type="ChEBI" id="CHEBI:57336"/>
        <dbReference type="ChEBI" id="CHEBI:456215"/>
    </reaction>
    <physiologicalReaction direction="left-to-right" evidence="3">
        <dbReference type="Rhea" id="RHEA:46181"/>
    </physiologicalReaction>
</comment>
<comment type="biophysicochemical properties">
    <kinetics>
        <KM evidence="3">164 uM for 2-methylpropanoate</KM>
        <KM evidence="3">25.2 uM for 2-methylbutanoate</KM>
        <KM evidence="3">356 uM for CoA</KM>
        <text evidence="3">kcat is 18.3 min(-1) with 2-methylpropanoate as substrate (PubMed:23300257). kcat is 10.5 min(-1) with 2-methylbutanoate as substrate (PubMed:23300257). kcat is 167 min(-1) with CoA as substrate (PubMed:23300257).</text>
    </kinetics>
</comment>
<comment type="pathway">
    <text evidence="7">Secondary metabolite biosynthesis.</text>
</comment>
<comment type="subcellular location">
    <subcellularLocation>
        <location evidence="3">Cytoplasm</location>
        <location evidence="3">Cytosol</location>
    </subcellularLocation>
</comment>
<comment type="tissue specificity">
    <text evidence="3">Mostly expressed in old leaves and in cones and glandular trichomes (lupulin glands) after flowering, and, to a lower extent, in stems, young leaves and flowers.</text>
</comment>
<comment type="developmental stage">
    <text evidence="3">Accumulates progressively in cones and glandular trichomes (lupulin glands) after flowering.</text>
</comment>
<comment type="domain">
    <text evidence="1">Both substrate-binding domains (SBD1 and SBD2) are involved in the substrate recognition, and are sufficient to confer the substrate specificity.</text>
</comment>
<comment type="similarity">
    <text evidence="5">Belongs to the ATP-dependent AMP-binding enzyme family.</text>
</comment>
<proteinExistence type="evidence at protein level"/>
<reference key="1">
    <citation type="journal article" date="2013" name="Mol. Plant">
        <title>Characterization of the formation of branched short-chain fatty acid:CoAs for bitter acid biosynthesis in hop glandular trichomes.</title>
        <authorList>
            <person name="Xu H."/>
            <person name="Zhang F."/>
            <person name="Liu B."/>
            <person name="Huhman D.V."/>
            <person name="Sumner L.W."/>
            <person name="Dixon R.A."/>
            <person name="Wang G."/>
        </authorList>
    </citation>
    <scope>NUCLEOTIDE SEQUENCE [MRNA]</scope>
    <scope>FUNCTION</scope>
    <scope>SUBCELLULAR LOCATION</scope>
    <scope>CATALYTIC ACTIVITY</scope>
    <scope>TISSUE SPECIFICITY</scope>
    <scope>DEVELOPMENTAL STAGE</scope>
    <scope>BIOPHYSICOCHEMICAL PROPERTIES</scope>
    <scope>GENE FAMILY</scope>
    <scope>NOMENCLATURE</scope>
    <source>
        <strain>cv. Nugget</strain>
    </source>
</reference>
<reference key="2">
    <citation type="journal article" date="2019" name="Nat. Prod. Rep.">
        <title>Non-volatile natural products in plant glandular trichomes: chemistry, biological activities and biosynthesis.</title>
        <authorList>
            <person name="Liu Y."/>
            <person name="Jing S.-X."/>
            <person name="Luo S.-H."/>
            <person name="Li S.-H."/>
        </authorList>
    </citation>
    <scope>PATHWAY</scope>
    <scope>REVIEW</scope>
</reference>
<sequence length="556" mass="60893">MEDLKPRPASSSPLTPLGFLERAATVYGDCTSVVYDAVSYTWSQTHRRCLCLASSIASLGIENGHVVSVLAPNVPQMYELHFAVPMAGAILNAVNLRLDARTISILLHHSESKLIFVDHLSRDLILEAIALFPKQAPVPRLVFMADESESGNSSELGKEFFCSYKDLIDRGDPDFKWVMPKSEWDPMILNYTSGTTSSPKGVVHCHRGIFIMTVDSLIDWGVPKQPVYLWTLPMFHANGWSYPWGMAAVGGTNICLRKFDSEIIYDMIKRHGVTHMCGAPVVLNMLSNAPGSEPLKTTVQIMTAGAPPPSAVLFRTESLGFAVSHGYGLTETAGLVVSCAWKKEWNHLPATERARLKSRQGVGTVMQTKIDVVDPVTGAAVKRDGSTLGEVVLRGGSVMLGYLKDPEGTAKSMTADGWFYTGDVGVMHPDGYLEIKDRSKDVIISGGENLSSVEVESILYSHPDILEAAVVARPDEFWGETPCAFVSLKKGLTKKPTEKEIVEYCRSKLPRYMVPKTVVFKEELPKTSTGKVQKFILRDMARGMGSATAGASRSRM</sequence>
<feature type="chain" id="PRO_0000452949" description="2-methylpropanoate--CoA ligase CCL4">
    <location>
        <begin position="1"/>
        <end position="556"/>
    </location>
</feature>
<feature type="region of interest" description="SBD1" evidence="1">
    <location>
        <begin position="260"/>
        <end position="325"/>
    </location>
</feature>
<feature type="region of interest" description="SBD2" evidence="1">
    <location>
        <begin position="326"/>
        <end position="402"/>
    </location>
</feature>
<feature type="binding site" evidence="2">
    <location>
        <begin position="192"/>
        <end position="200"/>
    </location>
    <ligand>
        <name>ATP</name>
        <dbReference type="ChEBI" id="CHEBI:30616"/>
    </ligand>
</feature>
<feature type="binding site" evidence="2">
    <location>
        <begin position="325"/>
        <end position="330"/>
    </location>
    <ligand>
        <name>ATP</name>
        <dbReference type="ChEBI" id="CHEBI:30616"/>
    </ligand>
</feature>
<feature type="binding site" evidence="2">
    <location>
        <position position="423"/>
    </location>
    <ligand>
        <name>ATP</name>
        <dbReference type="ChEBI" id="CHEBI:30616"/>
    </ligand>
</feature>
<feature type="binding site" evidence="2">
    <location>
        <begin position="435"/>
        <end position="438"/>
    </location>
    <ligand>
        <name>ATP</name>
        <dbReference type="ChEBI" id="CHEBI:30616"/>
    </ligand>
</feature>
<feature type="binding site" evidence="2">
    <location>
        <position position="531"/>
    </location>
    <ligand>
        <name>ATP</name>
        <dbReference type="ChEBI" id="CHEBI:30616"/>
    </ligand>
</feature>
<name>CCL4_HUMLU</name>